<protein>
    <recommendedName>
        <fullName evidence="1">4-hydroxy-2-oxohexanoate aldolase</fullName>
        <ecNumber evidence="1">4.1.3.43</ecNumber>
    </recommendedName>
    <alternativeName>
        <fullName evidence="2">4-hydroxy-2-keto-pentanoic acid aldolase</fullName>
    </alternativeName>
    <alternativeName>
        <fullName evidence="2">4-hydroxy-2-oxopentanoate aldolase</fullName>
    </alternativeName>
    <alternativeName>
        <fullName evidence="2">4-hydroxy-2-oxovalerate aldolase</fullName>
        <shortName evidence="2">HOA</shortName>
        <ecNumber evidence="2">4.1.3.39</ecNumber>
    </alternativeName>
</protein>
<proteinExistence type="inferred from homology"/>
<organism>
    <name type="scientific">Mycobacterium tuberculosis (strain ATCC 25177 / H37Ra)</name>
    <dbReference type="NCBI Taxonomy" id="419947"/>
    <lineage>
        <taxon>Bacteria</taxon>
        <taxon>Bacillati</taxon>
        <taxon>Actinomycetota</taxon>
        <taxon>Actinomycetes</taxon>
        <taxon>Mycobacteriales</taxon>
        <taxon>Mycobacteriaceae</taxon>
        <taxon>Mycobacterium</taxon>
        <taxon>Mycobacterium tuberculosis complex</taxon>
    </lineage>
</organism>
<gene>
    <name evidence="1" type="primary">hsaF</name>
    <name type="synonym">bphI</name>
    <name type="ordered locus">MRA_3573</name>
</gene>
<evidence type="ECO:0000250" key="1">
    <source>
        <dbReference type="UniProtKB" id="P9WMK5"/>
    </source>
</evidence>
<evidence type="ECO:0000255" key="2">
    <source>
        <dbReference type="HAMAP-Rule" id="MF_01656"/>
    </source>
</evidence>
<comment type="function">
    <text evidence="1">Involved in cholesterol degradation. Catalyzes the retro-aldol cleavage of 4-hydroxy-2-oxohexanoate (HOHA) to pyruvate and propanal. Can also catalyze the cleavage of 4-hydroxy-2-oxopentanoate (HOPA) to pyruvate and acetaldehyde. The aldehydes produced by this reaction are directly channeled to the dehydrogenase HsaG.</text>
</comment>
<comment type="catalytic activity">
    <reaction evidence="1">
        <text>(S)-4-hydroxy-2-oxohexanoate = propanal + pyruvate</text>
        <dbReference type="Rhea" id="RHEA:36003"/>
        <dbReference type="ChEBI" id="CHEBI:15361"/>
        <dbReference type="ChEBI" id="CHEBI:17153"/>
        <dbReference type="ChEBI" id="CHEBI:73142"/>
        <dbReference type="EC" id="4.1.3.43"/>
    </reaction>
    <physiologicalReaction direction="left-to-right" evidence="1">
        <dbReference type="Rhea" id="RHEA:36004"/>
    </physiologicalReaction>
</comment>
<comment type="catalytic activity">
    <reaction evidence="2">
        <text>(S)-4-hydroxy-2-oxopentanoate = acetaldehyde + pyruvate</text>
        <dbReference type="Rhea" id="RHEA:22624"/>
        <dbReference type="ChEBI" id="CHEBI:15343"/>
        <dbReference type="ChEBI" id="CHEBI:15361"/>
        <dbReference type="ChEBI" id="CHEBI:73143"/>
        <dbReference type="EC" id="4.1.3.39"/>
    </reaction>
    <physiologicalReaction direction="left-to-right" evidence="1">
        <dbReference type="Rhea" id="RHEA:22625"/>
    </physiologicalReaction>
</comment>
<comment type="cofactor">
    <cofactor evidence="1">
        <name>Mn(2+)</name>
        <dbReference type="ChEBI" id="CHEBI:29035"/>
    </cofactor>
</comment>
<comment type="subunit">
    <text evidence="1">Homodimer. Forms a heterotetramer composed of two aldolase (HsaF) and two dehydrogenase (HsaG) subunits.</text>
</comment>
<comment type="similarity">
    <text evidence="2">Belongs to the 4-hydroxy-2-oxovalerate aldolase family.</text>
</comment>
<keyword id="KW-0058">Aromatic hydrocarbons catabolism</keyword>
<keyword id="KW-0456">Lyase</keyword>
<keyword id="KW-0464">Manganese</keyword>
<keyword id="KW-0479">Metal-binding</keyword>
<keyword id="KW-1185">Reference proteome</keyword>
<sequence length="346" mass="36442">MTDMWDVRITDTSLRDGSHHKRHQFTKDEVGAIVAALDAAGVPVIEVTHGDGLGGSSFNYGFSKTPEQELIKLAAATAKEARIAFLMLPGVGTKDDIKEARDNGGSICRIATHCTEADVSIQHFGLARELGLETVGFLMMAHTIAPEKLAAQARIMADAGCQCVYVVDSAGALVLDGVADRVSALVAELGEDAQVGFHGHENLGLGVANSVAAVRAGAKQIDGSCRRFGAGAGNAPVEALIGVFDKIGVKTGIDFFDIADAAEDVVRPAMPAECLLDRNALIMGYSGVYSSFLKHAVRQAERYGVPASALLHRAGQRKLIGGQEDQLIDIALEIKRELDSGAAVTH</sequence>
<name>HOA_MYCTA</name>
<reference key="1">
    <citation type="journal article" date="2008" name="PLoS ONE">
        <title>Genetic basis of virulence attenuation revealed by comparative genomic analysis of Mycobacterium tuberculosis strain H37Ra versus H37Rv.</title>
        <authorList>
            <person name="Zheng H."/>
            <person name="Lu L."/>
            <person name="Wang B."/>
            <person name="Pu S."/>
            <person name="Zhang X."/>
            <person name="Zhu G."/>
            <person name="Shi W."/>
            <person name="Zhang L."/>
            <person name="Wang H."/>
            <person name="Wang S."/>
            <person name="Zhao G."/>
            <person name="Zhang Y."/>
        </authorList>
    </citation>
    <scope>NUCLEOTIDE SEQUENCE [LARGE SCALE GENOMIC DNA]</scope>
    <source>
        <strain>ATCC 25177 / H37Ra</strain>
    </source>
</reference>
<dbReference type="EC" id="4.1.3.43" evidence="1"/>
<dbReference type="EC" id="4.1.3.39" evidence="2"/>
<dbReference type="EMBL" id="CP000611">
    <property type="protein sequence ID" value="ABQ75358.1"/>
    <property type="molecule type" value="Genomic_DNA"/>
</dbReference>
<dbReference type="SMR" id="A5U8K8"/>
<dbReference type="KEGG" id="mra:MRA_3573"/>
<dbReference type="eggNOG" id="COG0119">
    <property type="taxonomic scope" value="Bacteria"/>
</dbReference>
<dbReference type="HOGENOM" id="CLU_049173_0_0_11"/>
<dbReference type="Proteomes" id="UP000001988">
    <property type="component" value="Chromosome"/>
</dbReference>
<dbReference type="GO" id="GO:0003852">
    <property type="term" value="F:2-isopropylmalate synthase activity"/>
    <property type="evidence" value="ECO:0007669"/>
    <property type="project" value="TreeGrafter"/>
</dbReference>
<dbReference type="GO" id="GO:0008701">
    <property type="term" value="F:4-hydroxy-2-oxovalerate aldolase activity"/>
    <property type="evidence" value="ECO:0007669"/>
    <property type="project" value="UniProtKB-UniRule"/>
</dbReference>
<dbReference type="GO" id="GO:0030145">
    <property type="term" value="F:manganese ion binding"/>
    <property type="evidence" value="ECO:0007669"/>
    <property type="project" value="UniProtKB-UniRule"/>
</dbReference>
<dbReference type="GO" id="GO:0009056">
    <property type="term" value="P:catabolic process"/>
    <property type="evidence" value="ECO:0007669"/>
    <property type="project" value="UniProtKB-KW"/>
</dbReference>
<dbReference type="GO" id="GO:0009098">
    <property type="term" value="P:L-leucine biosynthetic process"/>
    <property type="evidence" value="ECO:0007669"/>
    <property type="project" value="TreeGrafter"/>
</dbReference>
<dbReference type="CDD" id="cd07943">
    <property type="entry name" value="DRE_TIM_HOA"/>
    <property type="match status" value="1"/>
</dbReference>
<dbReference type="FunFam" id="1.10.8.60:FF:000042">
    <property type="entry name" value="4-hydroxy-2-oxovalerate aldolase"/>
    <property type="match status" value="1"/>
</dbReference>
<dbReference type="FunFam" id="3.20.20.70:FF:000072">
    <property type="entry name" value="4-hydroxy-2-oxovalerate aldolase"/>
    <property type="match status" value="1"/>
</dbReference>
<dbReference type="Gene3D" id="1.10.8.60">
    <property type="match status" value="1"/>
</dbReference>
<dbReference type="Gene3D" id="3.20.20.70">
    <property type="entry name" value="Aldolase class I"/>
    <property type="match status" value="1"/>
</dbReference>
<dbReference type="HAMAP" id="MF_01656">
    <property type="entry name" value="HOA"/>
    <property type="match status" value="1"/>
</dbReference>
<dbReference type="InterPro" id="IPR050073">
    <property type="entry name" value="2-IPM_HCS-like"/>
</dbReference>
<dbReference type="InterPro" id="IPR017629">
    <property type="entry name" value="4OH_2_O-val_aldolase"/>
</dbReference>
<dbReference type="InterPro" id="IPR013785">
    <property type="entry name" value="Aldolase_TIM"/>
</dbReference>
<dbReference type="InterPro" id="IPR012425">
    <property type="entry name" value="DmpG_comm"/>
</dbReference>
<dbReference type="InterPro" id="IPR035685">
    <property type="entry name" value="DRE_TIM_HOA"/>
</dbReference>
<dbReference type="InterPro" id="IPR000891">
    <property type="entry name" value="PYR_CT"/>
</dbReference>
<dbReference type="NCBIfam" id="TIGR03217">
    <property type="entry name" value="4OH_2_O_val_ald"/>
    <property type="match status" value="1"/>
</dbReference>
<dbReference type="NCBIfam" id="NF006049">
    <property type="entry name" value="PRK08195.1"/>
    <property type="match status" value="1"/>
</dbReference>
<dbReference type="PANTHER" id="PTHR10277:SF9">
    <property type="entry name" value="2-ISOPROPYLMALATE SYNTHASE 1, CHLOROPLASTIC-RELATED"/>
    <property type="match status" value="1"/>
</dbReference>
<dbReference type="PANTHER" id="PTHR10277">
    <property type="entry name" value="HOMOCITRATE SYNTHASE-RELATED"/>
    <property type="match status" value="1"/>
</dbReference>
<dbReference type="Pfam" id="PF07836">
    <property type="entry name" value="DmpG_comm"/>
    <property type="match status" value="1"/>
</dbReference>
<dbReference type="Pfam" id="PF00682">
    <property type="entry name" value="HMGL-like"/>
    <property type="match status" value="1"/>
</dbReference>
<dbReference type="SUPFAM" id="SSF51569">
    <property type="entry name" value="Aldolase"/>
    <property type="match status" value="1"/>
</dbReference>
<dbReference type="SUPFAM" id="SSF89000">
    <property type="entry name" value="post-HMGL domain-like"/>
    <property type="match status" value="1"/>
</dbReference>
<dbReference type="PROSITE" id="PS50991">
    <property type="entry name" value="PYR_CT"/>
    <property type="match status" value="1"/>
</dbReference>
<feature type="chain" id="PRO_0000387863" description="4-hydroxy-2-oxohexanoate aldolase">
    <location>
        <begin position="1"/>
        <end position="346"/>
    </location>
</feature>
<feature type="domain" description="Pyruvate carboxyltransferase" evidence="2">
    <location>
        <begin position="7"/>
        <end position="259"/>
    </location>
</feature>
<feature type="active site" description="Proton acceptor" evidence="2">
    <location>
        <position position="19"/>
    </location>
</feature>
<feature type="binding site" evidence="2">
    <location>
        <begin position="15"/>
        <end position="16"/>
    </location>
    <ligand>
        <name>substrate</name>
    </ligand>
</feature>
<feature type="binding site" evidence="2">
    <location>
        <position position="16"/>
    </location>
    <ligand>
        <name>Mn(2+)</name>
        <dbReference type="ChEBI" id="CHEBI:29035"/>
    </ligand>
</feature>
<feature type="binding site" evidence="2">
    <location>
        <position position="169"/>
    </location>
    <ligand>
        <name>substrate</name>
    </ligand>
</feature>
<feature type="binding site" evidence="2">
    <location>
        <position position="198"/>
    </location>
    <ligand>
        <name>Mn(2+)</name>
        <dbReference type="ChEBI" id="CHEBI:29035"/>
    </ligand>
</feature>
<feature type="binding site" evidence="2">
    <location>
        <position position="198"/>
    </location>
    <ligand>
        <name>substrate</name>
    </ligand>
</feature>
<feature type="binding site" evidence="2">
    <location>
        <position position="200"/>
    </location>
    <ligand>
        <name>Mn(2+)</name>
        <dbReference type="ChEBI" id="CHEBI:29035"/>
    </ligand>
</feature>
<feature type="binding site" evidence="2">
    <location>
        <position position="289"/>
    </location>
    <ligand>
        <name>substrate</name>
    </ligand>
</feature>
<feature type="site" description="Transition state stabilizer" evidence="2">
    <location>
        <position position="15"/>
    </location>
</feature>
<accession>A5U8K8</accession>